<organism>
    <name type="scientific">Buchnera aphidicola subsp. Baizongia pistaciae (strain Bp)</name>
    <dbReference type="NCBI Taxonomy" id="224915"/>
    <lineage>
        <taxon>Bacteria</taxon>
        <taxon>Pseudomonadati</taxon>
        <taxon>Pseudomonadota</taxon>
        <taxon>Gammaproteobacteria</taxon>
        <taxon>Enterobacterales</taxon>
        <taxon>Erwiniaceae</taxon>
        <taxon>Buchnera</taxon>
    </lineage>
</organism>
<comment type="function">
    <text evidence="1">Catalyzes the transfer of a methyl group from 5-methyltetrahydrofolate to homocysteine resulting in methionine formation.</text>
</comment>
<comment type="catalytic activity">
    <reaction evidence="1">
        <text>5-methyltetrahydropteroyltri-L-glutamate + L-homocysteine = tetrahydropteroyltri-L-glutamate + L-methionine</text>
        <dbReference type="Rhea" id="RHEA:21196"/>
        <dbReference type="ChEBI" id="CHEBI:57844"/>
        <dbReference type="ChEBI" id="CHEBI:58140"/>
        <dbReference type="ChEBI" id="CHEBI:58199"/>
        <dbReference type="ChEBI" id="CHEBI:58207"/>
        <dbReference type="EC" id="2.1.1.14"/>
    </reaction>
</comment>
<comment type="cofactor">
    <cofactor evidence="1">
        <name>Zn(2+)</name>
        <dbReference type="ChEBI" id="CHEBI:29105"/>
    </cofactor>
    <text evidence="1">Binds 1 zinc ion per subunit.</text>
</comment>
<comment type="pathway">
    <text evidence="1">Amino-acid biosynthesis; L-methionine biosynthesis via de novo pathway; L-methionine from L-homocysteine (MetE route): step 1/1.</text>
</comment>
<comment type="similarity">
    <text evidence="1">Belongs to the vitamin-B12 independent methionine synthase family.</text>
</comment>
<dbReference type="EC" id="2.1.1.14" evidence="1"/>
<dbReference type="EMBL" id="AE016826">
    <property type="protein sequence ID" value="AAO26774.1"/>
    <property type="molecule type" value="Genomic_DNA"/>
</dbReference>
<dbReference type="SMR" id="Q89B24"/>
<dbReference type="STRING" id="224915.bbp_031"/>
<dbReference type="KEGG" id="bab:bbp_031"/>
<dbReference type="eggNOG" id="COG0620">
    <property type="taxonomic scope" value="Bacteria"/>
</dbReference>
<dbReference type="HOGENOM" id="CLU_013175_0_0_6"/>
<dbReference type="OrthoDB" id="244285at2"/>
<dbReference type="UniPathway" id="UPA00051">
    <property type="reaction ID" value="UER00082"/>
</dbReference>
<dbReference type="Proteomes" id="UP000000601">
    <property type="component" value="Chromosome"/>
</dbReference>
<dbReference type="GO" id="GO:0003871">
    <property type="term" value="F:5-methyltetrahydropteroyltriglutamate-homocysteine S-methyltransferase activity"/>
    <property type="evidence" value="ECO:0007669"/>
    <property type="project" value="UniProtKB-UniRule"/>
</dbReference>
<dbReference type="GO" id="GO:0008270">
    <property type="term" value="F:zinc ion binding"/>
    <property type="evidence" value="ECO:0007669"/>
    <property type="project" value="InterPro"/>
</dbReference>
<dbReference type="GO" id="GO:0009086">
    <property type="term" value="P:methionine biosynthetic process"/>
    <property type="evidence" value="ECO:0007669"/>
    <property type="project" value="UniProtKB-UniRule"/>
</dbReference>
<dbReference type="GO" id="GO:0032259">
    <property type="term" value="P:methylation"/>
    <property type="evidence" value="ECO:0007669"/>
    <property type="project" value="UniProtKB-KW"/>
</dbReference>
<dbReference type="CDD" id="cd03311">
    <property type="entry name" value="CIMS_C_terminal_like"/>
    <property type="match status" value="1"/>
</dbReference>
<dbReference type="CDD" id="cd03312">
    <property type="entry name" value="CIMS_N_terminal_like"/>
    <property type="match status" value="1"/>
</dbReference>
<dbReference type="FunFam" id="3.20.20.210:FF:000002">
    <property type="entry name" value="5-methyltetrahydropteroyltriglutamate--homocysteine methyltransferase"/>
    <property type="match status" value="1"/>
</dbReference>
<dbReference type="FunFam" id="3.20.20.210:FF:000003">
    <property type="entry name" value="5-methyltetrahydropteroyltriglutamate--homocysteine methyltransferase"/>
    <property type="match status" value="1"/>
</dbReference>
<dbReference type="Gene3D" id="3.20.20.210">
    <property type="match status" value="2"/>
</dbReference>
<dbReference type="HAMAP" id="MF_00172">
    <property type="entry name" value="Meth_synth"/>
    <property type="match status" value="1"/>
</dbReference>
<dbReference type="InterPro" id="IPR013215">
    <property type="entry name" value="Cbl-indep_Met_Synth_N"/>
</dbReference>
<dbReference type="InterPro" id="IPR006276">
    <property type="entry name" value="Cobalamin-indep_Met_synthase"/>
</dbReference>
<dbReference type="InterPro" id="IPR002629">
    <property type="entry name" value="Met_Synth_C/arc"/>
</dbReference>
<dbReference type="InterPro" id="IPR038071">
    <property type="entry name" value="UROD/MetE-like_sf"/>
</dbReference>
<dbReference type="NCBIfam" id="TIGR01371">
    <property type="entry name" value="met_syn_B12ind"/>
    <property type="match status" value="1"/>
</dbReference>
<dbReference type="NCBIfam" id="NF003556">
    <property type="entry name" value="PRK05222.1"/>
    <property type="match status" value="1"/>
</dbReference>
<dbReference type="PANTHER" id="PTHR30519">
    <property type="entry name" value="5-METHYLTETRAHYDROPTEROYLTRIGLUTAMATE--HOMOCYSTEINE METHYLTRANSFERASE"/>
    <property type="match status" value="1"/>
</dbReference>
<dbReference type="Pfam" id="PF08267">
    <property type="entry name" value="Meth_synt_1"/>
    <property type="match status" value="1"/>
</dbReference>
<dbReference type="Pfam" id="PF01717">
    <property type="entry name" value="Meth_synt_2"/>
    <property type="match status" value="1"/>
</dbReference>
<dbReference type="PIRSF" id="PIRSF000382">
    <property type="entry name" value="MeTrfase_B12_ind"/>
    <property type="match status" value="1"/>
</dbReference>
<dbReference type="SUPFAM" id="SSF51726">
    <property type="entry name" value="UROD/MetE-like"/>
    <property type="match status" value="2"/>
</dbReference>
<feature type="chain" id="PRO_0000098621" description="5-methyltetrahydropteroyltriglutamate--homocysteine methyltransferase">
    <location>
        <begin position="1"/>
        <end position="756"/>
    </location>
</feature>
<feature type="active site" description="Proton donor" evidence="1">
    <location>
        <position position="696"/>
    </location>
</feature>
<feature type="binding site" evidence="1">
    <location>
        <begin position="16"/>
        <end position="19"/>
    </location>
    <ligand>
        <name>5-methyltetrahydropteroyltri-L-glutamate</name>
        <dbReference type="ChEBI" id="CHEBI:58207"/>
    </ligand>
</feature>
<feature type="binding site" evidence="1">
    <location>
        <position position="116"/>
    </location>
    <ligand>
        <name>5-methyltetrahydropteroyltri-L-glutamate</name>
        <dbReference type="ChEBI" id="CHEBI:58207"/>
    </ligand>
</feature>
<feature type="binding site" evidence="1">
    <location>
        <begin position="433"/>
        <end position="435"/>
    </location>
    <ligand>
        <name>L-homocysteine</name>
        <dbReference type="ChEBI" id="CHEBI:58199"/>
    </ligand>
</feature>
<feature type="binding site" evidence="1">
    <location>
        <begin position="433"/>
        <end position="435"/>
    </location>
    <ligand>
        <name>L-methionine</name>
        <dbReference type="ChEBI" id="CHEBI:57844"/>
    </ligand>
</feature>
<feature type="binding site" evidence="1">
    <location>
        <position position="486"/>
    </location>
    <ligand>
        <name>L-homocysteine</name>
        <dbReference type="ChEBI" id="CHEBI:58199"/>
    </ligand>
</feature>
<feature type="binding site" evidence="1">
    <location>
        <position position="486"/>
    </location>
    <ligand>
        <name>L-methionine</name>
        <dbReference type="ChEBI" id="CHEBI:57844"/>
    </ligand>
</feature>
<feature type="binding site" evidence="1">
    <location>
        <begin position="517"/>
        <end position="518"/>
    </location>
    <ligand>
        <name>5-methyltetrahydropteroyltri-L-glutamate</name>
        <dbReference type="ChEBI" id="CHEBI:58207"/>
    </ligand>
</feature>
<feature type="binding site" evidence="1">
    <location>
        <position position="563"/>
    </location>
    <ligand>
        <name>5-methyltetrahydropteroyltri-L-glutamate</name>
        <dbReference type="ChEBI" id="CHEBI:58207"/>
    </ligand>
</feature>
<feature type="binding site" evidence="1">
    <location>
        <position position="601"/>
    </location>
    <ligand>
        <name>L-homocysteine</name>
        <dbReference type="ChEBI" id="CHEBI:58199"/>
    </ligand>
</feature>
<feature type="binding site" evidence="1">
    <location>
        <position position="601"/>
    </location>
    <ligand>
        <name>L-methionine</name>
        <dbReference type="ChEBI" id="CHEBI:57844"/>
    </ligand>
</feature>
<feature type="binding site" evidence="1">
    <location>
        <position position="607"/>
    </location>
    <ligand>
        <name>5-methyltetrahydropteroyltri-L-glutamate</name>
        <dbReference type="ChEBI" id="CHEBI:58207"/>
    </ligand>
</feature>
<feature type="binding site" evidence="1">
    <location>
        <position position="643"/>
    </location>
    <ligand>
        <name>Zn(2+)</name>
        <dbReference type="ChEBI" id="CHEBI:29105"/>
        <note>catalytic</note>
    </ligand>
</feature>
<feature type="binding site" evidence="1">
    <location>
        <position position="645"/>
    </location>
    <ligand>
        <name>Zn(2+)</name>
        <dbReference type="ChEBI" id="CHEBI:29105"/>
        <note>catalytic</note>
    </ligand>
</feature>
<feature type="binding site" evidence="1">
    <location>
        <position position="667"/>
    </location>
    <ligand>
        <name>Zn(2+)</name>
        <dbReference type="ChEBI" id="CHEBI:29105"/>
        <note>catalytic</note>
    </ligand>
</feature>
<feature type="binding site" evidence="1">
    <location>
        <position position="728"/>
    </location>
    <ligand>
        <name>Zn(2+)</name>
        <dbReference type="ChEBI" id="CHEBI:29105"/>
        <note>catalytic</note>
    </ligand>
</feature>
<reference key="1">
    <citation type="journal article" date="2003" name="Proc. Natl. Acad. Sci. U.S.A.">
        <title>Reductive genome evolution in Buchnera aphidicola.</title>
        <authorList>
            <person name="van Ham R.C.H.J."/>
            <person name="Kamerbeek J."/>
            <person name="Palacios C."/>
            <person name="Rausell C."/>
            <person name="Abascal F."/>
            <person name="Bastolla U."/>
            <person name="Fernandez J.M."/>
            <person name="Jimenez L."/>
            <person name="Postigo M."/>
            <person name="Silva F.J."/>
            <person name="Tamames J."/>
            <person name="Viguera E."/>
            <person name="Latorre A."/>
            <person name="Valencia A."/>
            <person name="Moran F."/>
            <person name="Moya A."/>
        </authorList>
    </citation>
    <scope>NUCLEOTIDE SEQUENCE [LARGE SCALE GENOMIC DNA]</scope>
    <source>
        <strain>Bp</strain>
    </source>
</reference>
<protein>
    <recommendedName>
        <fullName evidence="1">5-methyltetrahydropteroyltriglutamate--homocysteine methyltransferase</fullName>
        <ecNumber evidence="1">2.1.1.14</ecNumber>
    </recommendedName>
    <alternativeName>
        <fullName evidence="1">Cobalamin-independent methionine synthase</fullName>
    </alternativeName>
    <alternativeName>
        <fullName evidence="1">Methionine synthase, vitamin-B12 independent isozyme</fullName>
    </alternativeName>
</protein>
<name>METE_BUCBP</name>
<evidence type="ECO:0000255" key="1">
    <source>
        <dbReference type="HAMAP-Rule" id="MF_00172"/>
    </source>
</evidence>
<keyword id="KW-0028">Amino-acid biosynthesis</keyword>
<keyword id="KW-0479">Metal-binding</keyword>
<keyword id="KW-0486">Methionine biosynthesis</keyword>
<keyword id="KW-0489">Methyltransferase</keyword>
<keyword id="KW-1185">Reference proteome</keyword>
<keyword id="KW-0677">Repeat</keyword>
<keyword id="KW-0808">Transferase</keyword>
<keyword id="KW-0862">Zinc</keyword>
<accession>Q89B24</accession>
<sequence>MINNHTLGFPRIGLFRELKVAQEKYWSRKISKEELFSVGKTLRVRHWQQQKELGINYIPVGDFSWYDHVLGTSMLLGNIPKRHKNGNDLVTLDTLFRVARGVAPTGASVSASEMTKWFNTNYHYIVPEFSIKSEFCFSWRQILDEIDEALLLGHQVKPVILGPLTYLWLGKVKGKKFDRLNLLKEILPVYKYLLSEINDRNISWVQIDEPILTLELPEKWKNAFRFAYQSLYGYNSLLLTTYFGSVQHNFSLICELPIQGVHLDLVHGKYDLVFLNSFIPEKWLISLGIINGKNIWKADLVMWFKRLQLFSKLRHSLWIGTSCSLLHVPIDLKLENKISSEVRSWFSFALQKCQELTLLRDALNNSNTVTEDIRVWSQPIHSRKKSAIVHNVDVKERLKSITSNDFKRNNVFSVRKQKQHKNLKLPILPTTTIGSFPQTADIRKARFDFKKGNINHDQYNTFISKHIQNAILKQEKLGIDVLVHGEFERNDMVEYFGEHLNGFVFTEFGWVQSYGSRCVKPPIIIGDVSRSKPISLDWIKYAQTLTSKPVKGMLTGPVTILLWSFVREDLSKKIISRQIALALRDEVLDLEQSGVKIIQIDEPALREGLPLRLSLRNEYLSWAVDSFKLSSSGVCDETQIHTHMCYCEFNDIMNAIVLLDADVITIETSRSDMELLEFFKEFKYPNDIGPGVYDIHSPNIPSIEWIMTLLRQAMHYIPVKRLWVNPDCGLKTRTWDETYYSLENMVRAAKILRKKL</sequence>
<proteinExistence type="inferred from homology"/>
<gene>
    <name evidence="1" type="primary">metE</name>
    <name type="ordered locus">bbp_031</name>
</gene>